<sequence length="90" mass="9785">MLEFLTRLFSKDGGSKNVAKERLRLVLVHDRTSISPQLLETLKAELIKVISNYMEIDEAALEVSLDSSGNTVALVASIPVKGMKRVAGTA</sequence>
<gene>
    <name evidence="1" type="primary">minE</name>
    <name type="ordered locus">PTH_0823</name>
</gene>
<organism>
    <name type="scientific">Pelotomaculum thermopropionicum (strain DSM 13744 / JCM 10971 / SI)</name>
    <dbReference type="NCBI Taxonomy" id="370438"/>
    <lineage>
        <taxon>Bacteria</taxon>
        <taxon>Bacillati</taxon>
        <taxon>Bacillota</taxon>
        <taxon>Clostridia</taxon>
        <taxon>Eubacteriales</taxon>
        <taxon>Desulfotomaculaceae</taxon>
        <taxon>Pelotomaculum</taxon>
    </lineage>
</organism>
<reference key="1">
    <citation type="journal article" date="2008" name="Genome Res.">
        <title>The genome of Pelotomaculum thermopropionicum reveals niche-associated evolution in anaerobic microbiota.</title>
        <authorList>
            <person name="Kosaka T."/>
            <person name="Kato S."/>
            <person name="Shimoyama T."/>
            <person name="Ishii S."/>
            <person name="Abe T."/>
            <person name="Watanabe K."/>
        </authorList>
    </citation>
    <scope>NUCLEOTIDE SEQUENCE [LARGE SCALE GENOMIC DNA]</scope>
    <source>
        <strain>DSM 13744 / JCM 10971 / SI</strain>
    </source>
</reference>
<keyword id="KW-0131">Cell cycle</keyword>
<keyword id="KW-0132">Cell division</keyword>
<keyword id="KW-1185">Reference proteome</keyword>
<dbReference type="EMBL" id="AP009389">
    <property type="protein sequence ID" value="BAF59004.1"/>
    <property type="molecule type" value="Genomic_DNA"/>
</dbReference>
<dbReference type="STRING" id="370438.PTH_0823"/>
<dbReference type="KEGG" id="pth:PTH_0823"/>
<dbReference type="eggNOG" id="COG0851">
    <property type="taxonomic scope" value="Bacteria"/>
</dbReference>
<dbReference type="HOGENOM" id="CLU_137929_1_1_9"/>
<dbReference type="Proteomes" id="UP000006556">
    <property type="component" value="Chromosome"/>
</dbReference>
<dbReference type="GO" id="GO:0051301">
    <property type="term" value="P:cell division"/>
    <property type="evidence" value="ECO:0007669"/>
    <property type="project" value="UniProtKB-KW"/>
</dbReference>
<dbReference type="GO" id="GO:0032955">
    <property type="term" value="P:regulation of division septum assembly"/>
    <property type="evidence" value="ECO:0007669"/>
    <property type="project" value="InterPro"/>
</dbReference>
<dbReference type="Gene3D" id="3.30.1070.10">
    <property type="entry name" value="Cell division topological specificity factor MinE"/>
    <property type="match status" value="1"/>
</dbReference>
<dbReference type="HAMAP" id="MF_00262">
    <property type="entry name" value="MinE"/>
    <property type="match status" value="1"/>
</dbReference>
<dbReference type="InterPro" id="IPR005527">
    <property type="entry name" value="MinE"/>
</dbReference>
<dbReference type="InterPro" id="IPR036707">
    <property type="entry name" value="MinE_sf"/>
</dbReference>
<dbReference type="NCBIfam" id="TIGR01215">
    <property type="entry name" value="minE"/>
    <property type="match status" value="1"/>
</dbReference>
<dbReference type="Pfam" id="PF03776">
    <property type="entry name" value="MinE"/>
    <property type="match status" value="1"/>
</dbReference>
<dbReference type="SUPFAM" id="SSF55229">
    <property type="entry name" value="Cell division protein MinE topological specificity domain"/>
    <property type="match status" value="1"/>
</dbReference>
<proteinExistence type="inferred from homology"/>
<feature type="chain" id="PRO_1000191293" description="Cell division topological specificity factor">
    <location>
        <begin position="1"/>
        <end position="90"/>
    </location>
</feature>
<protein>
    <recommendedName>
        <fullName evidence="1">Cell division topological specificity factor</fullName>
    </recommendedName>
</protein>
<comment type="function">
    <text evidence="1">Prevents the cell division inhibition by proteins MinC and MinD at internal division sites while permitting inhibition at polar sites. This ensures cell division at the proper site by restricting the formation of a division septum at the midpoint of the long axis of the cell.</text>
</comment>
<comment type="similarity">
    <text evidence="1">Belongs to the MinE family.</text>
</comment>
<name>MINE_PELTS</name>
<accession>A5D434</accession>
<evidence type="ECO:0000255" key="1">
    <source>
        <dbReference type="HAMAP-Rule" id="MF_00262"/>
    </source>
</evidence>